<keyword id="KW-0460">Magnesium</keyword>
<keyword id="KW-0464">Manganese</keyword>
<keyword id="KW-0474">Menaquinone biosynthesis</keyword>
<keyword id="KW-0479">Metal-binding</keyword>
<keyword id="KW-0786">Thiamine pyrophosphate</keyword>
<keyword id="KW-0808">Transferase</keyword>
<evidence type="ECO:0000255" key="1">
    <source>
        <dbReference type="HAMAP-Rule" id="MF_01659"/>
    </source>
</evidence>
<accession>B5EZI8</accession>
<feature type="chain" id="PRO_1000187088" description="2-succinyl-5-enolpyruvyl-6-hydroxy-3-cyclohexene-1-carboxylate synthase">
    <location>
        <begin position="1"/>
        <end position="556"/>
    </location>
</feature>
<gene>
    <name evidence="1" type="primary">menD</name>
    <name type="ordered locus">SeAg_B2445</name>
</gene>
<reference key="1">
    <citation type="journal article" date="2011" name="J. Bacteriol.">
        <title>Comparative genomics of 28 Salmonella enterica isolates: evidence for CRISPR-mediated adaptive sublineage evolution.</title>
        <authorList>
            <person name="Fricke W.F."/>
            <person name="Mammel M.K."/>
            <person name="McDermott P.F."/>
            <person name="Tartera C."/>
            <person name="White D.G."/>
            <person name="Leclerc J.E."/>
            <person name="Ravel J."/>
            <person name="Cebula T.A."/>
        </authorList>
    </citation>
    <scope>NUCLEOTIDE SEQUENCE [LARGE SCALE GENOMIC DNA]</scope>
    <source>
        <strain>SL483</strain>
    </source>
</reference>
<dbReference type="EC" id="2.2.1.9" evidence="1"/>
<dbReference type="EMBL" id="CP001138">
    <property type="protein sequence ID" value="ACH52199.1"/>
    <property type="molecule type" value="Genomic_DNA"/>
</dbReference>
<dbReference type="RefSeq" id="WP_000116385.1">
    <property type="nucleotide sequence ID" value="NC_011149.1"/>
</dbReference>
<dbReference type="SMR" id="B5EZI8"/>
<dbReference type="KEGG" id="sea:SeAg_B2445"/>
<dbReference type="HOGENOM" id="CLU_006051_3_0_6"/>
<dbReference type="UniPathway" id="UPA00079"/>
<dbReference type="UniPathway" id="UPA01057">
    <property type="reaction ID" value="UER00164"/>
</dbReference>
<dbReference type="Proteomes" id="UP000008819">
    <property type="component" value="Chromosome"/>
</dbReference>
<dbReference type="GO" id="GO:0070204">
    <property type="term" value="F:2-succinyl-5-enolpyruvyl-6-hydroxy-3-cyclohexene-1-carboxylic-acid synthase activity"/>
    <property type="evidence" value="ECO:0007669"/>
    <property type="project" value="UniProtKB-UniRule"/>
</dbReference>
<dbReference type="GO" id="GO:0000287">
    <property type="term" value="F:magnesium ion binding"/>
    <property type="evidence" value="ECO:0007669"/>
    <property type="project" value="UniProtKB-UniRule"/>
</dbReference>
<dbReference type="GO" id="GO:0030145">
    <property type="term" value="F:manganese ion binding"/>
    <property type="evidence" value="ECO:0007669"/>
    <property type="project" value="UniProtKB-UniRule"/>
</dbReference>
<dbReference type="GO" id="GO:0030976">
    <property type="term" value="F:thiamine pyrophosphate binding"/>
    <property type="evidence" value="ECO:0007669"/>
    <property type="project" value="UniProtKB-UniRule"/>
</dbReference>
<dbReference type="GO" id="GO:0009234">
    <property type="term" value="P:menaquinone biosynthetic process"/>
    <property type="evidence" value="ECO:0007669"/>
    <property type="project" value="UniProtKB-UniRule"/>
</dbReference>
<dbReference type="CDD" id="cd07037">
    <property type="entry name" value="TPP_PYR_MenD"/>
    <property type="match status" value="1"/>
</dbReference>
<dbReference type="CDD" id="cd02009">
    <property type="entry name" value="TPP_SHCHC_synthase"/>
    <property type="match status" value="1"/>
</dbReference>
<dbReference type="FunFam" id="3.40.50.1220:FF:000010">
    <property type="entry name" value="2-succinyl-5-enolpyruvyl-6-hydroxy-3-cyclohexene-1-carboxylate synthase"/>
    <property type="match status" value="1"/>
</dbReference>
<dbReference type="FunFam" id="3.40.50.970:FF:000029">
    <property type="entry name" value="2-succinyl-5-enolpyruvyl-6-hydroxy-3-cyclohexene-1-carboxylate synthase"/>
    <property type="match status" value="1"/>
</dbReference>
<dbReference type="Gene3D" id="3.40.50.970">
    <property type="match status" value="2"/>
</dbReference>
<dbReference type="Gene3D" id="3.40.50.1220">
    <property type="entry name" value="TPP-binding domain"/>
    <property type="match status" value="1"/>
</dbReference>
<dbReference type="HAMAP" id="MF_01659">
    <property type="entry name" value="MenD"/>
    <property type="match status" value="1"/>
</dbReference>
<dbReference type="InterPro" id="IPR004433">
    <property type="entry name" value="MenaQ_synth_MenD"/>
</dbReference>
<dbReference type="InterPro" id="IPR032264">
    <property type="entry name" value="MenD_middle"/>
</dbReference>
<dbReference type="InterPro" id="IPR029061">
    <property type="entry name" value="THDP-binding"/>
</dbReference>
<dbReference type="InterPro" id="IPR012001">
    <property type="entry name" value="Thiamin_PyroP_enz_TPP-bd_dom"/>
</dbReference>
<dbReference type="InterPro" id="IPR011766">
    <property type="entry name" value="TPP_enzyme_TPP-bd"/>
</dbReference>
<dbReference type="NCBIfam" id="TIGR00173">
    <property type="entry name" value="menD"/>
    <property type="match status" value="1"/>
</dbReference>
<dbReference type="PANTHER" id="PTHR42916">
    <property type="entry name" value="2-SUCCINYL-5-ENOLPYRUVYL-6-HYDROXY-3-CYCLOHEXENE-1-CARBOXYLATE SYNTHASE"/>
    <property type="match status" value="1"/>
</dbReference>
<dbReference type="PANTHER" id="PTHR42916:SF1">
    <property type="entry name" value="PROTEIN PHYLLO, CHLOROPLASTIC"/>
    <property type="match status" value="1"/>
</dbReference>
<dbReference type="Pfam" id="PF02775">
    <property type="entry name" value="TPP_enzyme_C"/>
    <property type="match status" value="1"/>
</dbReference>
<dbReference type="Pfam" id="PF16582">
    <property type="entry name" value="TPP_enzyme_M_2"/>
    <property type="match status" value="1"/>
</dbReference>
<dbReference type="Pfam" id="PF02776">
    <property type="entry name" value="TPP_enzyme_N"/>
    <property type="match status" value="1"/>
</dbReference>
<dbReference type="PIRSF" id="PIRSF004983">
    <property type="entry name" value="MenD"/>
    <property type="match status" value="1"/>
</dbReference>
<dbReference type="SUPFAM" id="SSF52518">
    <property type="entry name" value="Thiamin diphosphate-binding fold (THDP-binding)"/>
    <property type="match status" value="2"/>
</dbReference>
<protein>
    <recommendedName>
        <fullName evidence="1">2-succinyl-5-enolpyruvyl-6-hydroxy-3-cyclohexene-1-carboxylate synthase</fullName>
        <shortName evidence="1">SEPHCHC synthase</shortName>
        <ecNumber evidence="1">2.2.1.9</ecNumber>
    </recommendedName>
    <alternativeName>
        <fullName evidence="1">Menaquinone biosynthesis protein MenD</fullName>
    </alternativeName>
</protein>
<comment type="function">
    <text evidence="1">Catalyzes the thiamine diphosphate-dependent decarboxylation of 2-oxoglutarate and the subsequent addition of the resulting succinic semialdehyde-thiamine pyrophosphate anion to isochorismate to yield 2-succinyl-5-enolpyruvyl-6-hydroxy-3-cyclohexene-1-carboxylate (SEPHCHC).</text>
</comment>
<comment type="catalytic activity">
    <reaction evidence="1">
        <text>isochorismate + 2-oxoglutarate + H(+) = 5-enolpyruvoyl-6-hydroxy-2-succinyl-cyclohex-3-ene-1-carboxylate + CO2</text>
        <dbReference type="Rhea" id="RHEA:25593"/>
        <dbReference type="ChEBI" id="CHEBI:15378"/>
        <dbReference type="ChEBI" id="CHEBI:16526"/>
        <dbReference type="ChEBI" id="CHEBI:16810"/>
        <dbReference type="ChEBI" id="CHEBI:29780"/>
        <dbReference type="ChEBI" id="CHEBI:58818"/>
        <dbReference type="EC" id="2.2.1.9"/>
    </reaction>
</comment>
<comment type="cofactor">
    <cofactor evidence="1">
        <name>Mg(2+)</name>
        <dbReference type="ChEBI" id="CHEBI:18420"/>
    </cofactor>
    <cofactor evidence="1">
        <name>Mn(2+)</name>
        <dbReference type="ChEBI" id="CHEBI:29035"/>
    </cofactor>
</comment>
<comment type="cofactor">
    <cofactor evidence="1">
        <name>thiamine diphosphate</name>
        <dbReference type="ChEBI" id="CHEBI:58937"/>
    </cofactor>
    <text evidence="1">Binds 1 thiamine pyrophosphate per subunit.</text>
</comment>
<comment type="pathway">
    <text evidence="1">Quinol/quinone metabolism; 1,4-dihydroxy-2-naphthoate biosynthesis; 1,4-dihydroxy-2-naphthoate from chorismate: step 2/7.</text>
</comment>
<comment type="pathway">
    <text evidence="1">Quinol/quinone metabolism; menaquinone biosynthesis.</text>
</comment>
<comment type="subunit">
    <text evidence="1">Homodimer.</text>
</comment>
<comment type="similarity">
    <text evidence="1">Belongs to the TPP enzyme family. MenD subfamily.</text>
</comment>
<name>MEND_SALA4</name>
<organism>
    <name type="scientific">Salmonella agona (strain SL483)</name>
    <dbReference type="NCBI Taxonomy" id="454166"/>
    <lineage>
        <taxon>Bacteria</taxon>
        <taxon>Pseudomonadati</taxon>
        <taxon>Pseudomonadota</taxon>
        <taxon>Gammaproteobacteria</taxon>
        <taxon>Enterobacterales</taxon>
        <taxon>Enterobacteriaceae</taxon>
        <taxon>Salmonella</taxon>
    </lineage>
</organism>
<sequence>MSVSAFNRRWAAVILEALTRHGVRHVCIAPGSRSTPLTLAAAENPAFIHHTHFDERGLGHLALGLAKVSQQPVAVIVTSGTAVANLYPALIEAGLTGEKLILLTADRPPELIDCGANQAIRQAGMFASHPSQTLSLPRPTQDIPARWLVSTIDNALAMLHAGALHINCPFAEPLYGDMNDTGLVWQQRLGDWWQDEKPWLREARRLASDKQRDWFFWRQKRGVVVAGRMSAEEGKKVAQWAQTLGWPLIGDVLSQTGQPLPCADLWLGNAKAVTELQQAQIVVQLGSSLTGKRLLQWQATCEPEEYWVIDNIEGRLDPAHHRGRRLVAKIADWLEMHPAEKRKPWCVEIPRLAELAWQRVVAQRDTFGEAQLAHRIRDYLPEQGQLFVGNSLVVRLIDALSQLPAGYPVYSNRGASGIDGLLSTAAGVQRASAKSTLAIVGDLSALYDLNALALLRQVSAPFVLIVVNNNGGQIFSLLPTPQSKRERFYLMPQNVHFDHAAAMFNLRYHRPENWEELESVLAGAWRTPATTVIELVVNDTDGAQTLQQLLAQVSHL</sequence>
<proteinExistence type="inferred from homology"/>